<comment type="function">
    <text evidence="5 9">Transcription factor specifically required to repress SINE-VNTR-Alu (SVA) retrotransposons: recognizes and binds SVA sequences and represses their expression by recruiting a repressive complex containing TRIM28/KAP1 (PubMed:25274305). May also bind the promoter of the FCGR2B gene, leading to repress its expression; however, additional evidence is required to confirm this result in vivo (PubMed:11470777).</text>
</comment>
<comment type="subcellular location">
    <subcellularLocation>
        <location evidence="4">Nucleus</location>
    </subcellularLocation>
</comment>
<comment type="alternative products">
    <event type="alternative splicing"/>
    <isoform>
        <id>Q05481-1</id>
        <name>1</name>
        <sequence type="displayed"/>
    </isoform>
    <isoform>
        <id>Q05481-2</id>
        <name>2</name>
        <sequence type="described" ref="VSP_040288"/>
    </isoform>
</comment>
<comment type="miscellaneous">
    <text evidence="5 10 11">ZNF91 is only present in primates and emerged in the last common ancestor of humans and Old-World monkeys. It underwent structural changes between 8-12 Million years ago, probably to improve the protein's ability to bind and repress SINE-VNTR-Alu (SVA) retrotransposons elements (PubMed:25274305).</text>
</comment>
<comment type="similarity">
    <text evidence="8">Belongs to the krueppel C2H2-type zinc-finger protein family.</text>
</comment>
<comment type="sequence caution" evidence="8">
    <conflict type="frameshift">
        <sequence resource="EMBL-CDS" id="AAA58672"/>
    </conflict>
</comment>
<gene>
    <name type="primary">ZNF91</name>
</gene>
<organism>
    <name type="scientific">Homo sapiens</name>
    <name type="common">Human</name>
    <dbReference type="NCBI Taxonomy" id="9606"/>
    <lineage>
        <taxon>Eukaryota</taxon>
        <taxon>Metazoa</taxon>
        <taxon>Chordata</taxon>
        <taxon>Craniata</taxon>
        <taxon>Vertebrata</taxon>
        <taxon>Euteleostomi</taxon>
        <taxon>Mammalia</taxon>
        <taxon>Eutheria</taxon>
        <taxon>Euarchontoglires</taxon>
        <taxon>Primates</taxon>
        <taxon>Haplorrhini</taxon>
        <taxon>Catarrhini</taxon>
        <taxon>Hominidae</taxon>
        <taxon>Homo</taxon>
    </lineage>
</organism>
<name>ZNF91_HUMAN</name>
<sequence length="1191" mass="137217">MPGTPGSLEMGLLTFRDVAIEFSPEEWQCLDTAQQNLYRNVMLENYRNLAFLGIALSKPDLITYLEQGKEPWNMKQHEMVDEPTGICPHFPQDFWPEQSMEDSFQKVLLRKYEKCGHENLQLRKGCKSVDECKVHKEGYNKLNQCLTTAQSKVFQCGKYLKVFYKFLNSNRHTIRHTGKKCFKCKKCVKSFCIRLHKTQHKCVYITEKSCKCKECEKTFHWSSTLTNHKEIHTEDKPYKCEECGKAFKQLSTLTTHKIICAKEKIYKCEECGKAFLWSSTLTRHKRIHTGEKPYKCEECGKAFSHSSTLAKHKRIHTGEKPYKCEECGKAFSRSSTLAKHKRIHTGEKPYKCKECGKAFSNSSTLANHKITHTEEKPYKCKECDKAFKRLSTLTKHKIIHAGEKLYKCEECGKAFNRSSNLTIHKFIHTGEKPYKCEECGKAFNWSSSLTKHKRFHTREKPFKCKECGKAFIWSSTLTRHKRIHTGEKPYKCEECGKAFRQSSTLTKHKIIHTGEKPYKFEECGKAFRQSLTLNKHKIIHSREKPYKCKECGKAFKQFSTLTTHKIIHAGKKLYKCEECGKAFNHSSSLSTHKIIHTGEKSYKCEECGKAFLWSSTLRRHKRIHTGEKPYKCEECGKAFSHSSALAKHKRIHTGEKPYKCKECGKAFSNSSTLANHKITHTEEKPYKCKECDKTFKRLSTLTKHKIIHAGEKLYKCEECGKAFNRSSNLTIHKFIHTGEKPYKCEECGKAFNWSSSLTKHKRIHTREKPFKCKECGKAFIWSSTLTRHKRIHTGEKPYKCEECGKAFSRSSTLTKHKTIHTGEKPYKCKECGKAFKHSSALAKHKIIHAGEKLYKCEECGKAFNQSSNLTTHKIIHTKEKPSKSEECDKAFIWSSTLTEHKRIHTREKTYKCEECGKAFSQPSHLTTHKRMHTGEKPYKCEECGKAFSQSSTLTTHKIIHTGEKPYKCEECGKAFRKSSTLTEHKIIHTGEKPYKCEECGKAFSQSSTLTRHTRMHTGEKPYKCEECGKAFNRSSKLTTHKIIHTGEKPYKCEECGKAFISSSTLNGHKRIHTREKPYKCEECGKAFSQSSTLTRHKRLHTGEKPYKCGECGKAFKESSALTKHKIIHTGEKPYKCEKCGKAFNQSSILTNHKKIHTITPVIPLLWEAEAGGSRGQEMETILANTVKPLLY</sequence>
<evidence type="ECO:0000255" key="1">
    <source>
        <dbReference type="PROSITE-ProRule" id="PRU00042"/>
    </source>
</evidence>
<evidence type="ECO:0000255" key="2">
    <source>
        <dbReference type="PROSITE-ProRule" id="PRU00119"/>
    </source>
</evidence>
<evidence type="ECO:0000269" key="3">
    <source>
    </source>
</evidence>
<evidence type="ECO:0000269" key="4">
    <source>
    </source>
</evidence>
<evidence type="ECO:0000269" key="5">
    <source>
    </source>
</evidence>
<evidence type="ECO:0000269" key="6">
    <source>
    </source>
</evidence>
<evidence type="ECO:0000303" key="7">
    <source>
    </source>
</evidence>
<evidence type="ECO:0000305" key="8"/>
<evidence type="ECO:0000305" key="9">
    <source>
    </source>
</evidence>
<evidence type="ECO:0000305" key="10">
    <source>
    </source>
</evidence>
<evidence type="ECO:0000305" key="11">
    <source>
    </source>
</evidence>
<protein>
    <recommendedName>
        <fullName>Zinc finger protein 91</fullName>
    </recommendedName>
    <alternativeName>
        <fullName>Zinc finger protein HPF7</fullName>
    </alternativeName>
    <alternativeName>
        <fullName>Zinc finger protein HTF10</fullName>
    </alternativeName>
</protein>
<accession>Q05481</accession>
<accession>A8K5E1</accession>
<accession>B7Z6G6</accession>
<keyword id="KW-0025">Alternative splicing</keyword>
<keyword id="KW-0238">DNA-binding</keyword>
<keyword id="KW-0479">Metal-binding</keyword>
<keyword id="KW-0539">Nucleus</keyword>
<keyword id="KW-1267">Proteomics identification</keyword>
<keyword id="KW-1185">Reference proteome</keyword>
<keyword id="KW-0677">Repeat</keyword>
<keyword id="KW-0678">Repressor</keyword>
<keyword id="KW-0804">Transcription</keyword>
<keyword id="KW-0805">Transcription regulation</keyword>
<keyword id="KW-0862">Zinc</keyword>
<keyword id="KW-0863">Zinc-finger</keyword>
<dbReference type="EMBL" id="L11672">
    <property type="protein sequence ID" value="AAA59469.1"/>
    <property type="molecule type" value="mRNA"/>
</dbReference>
<dbReference type="EMBL" id="AK300294">
    <property type="protein sequence ID" value="BAH13252.1"/>
    <property type="molecule type" value="mRNA"/>
</dbReference>
<dbReference type="EMBL" id="AK291256">
    <property type="protein sequence ID" value="BAF83945.1"/>
    <property type="molecule type" value="mRNA"/>
</dbReference>
<dbReference type="EMBL" id="AC010300">
    <property type="status" value="NOT_ANNOTATED_CDS"/>
    <property type="molecule type" value="Genomic_DNA"/>
</dbReference>
<dbReference type="EMBL" id="AC016628">
    <property type="status" value="NOT_ANNOTATED_CDS"/>
    <property type="molecule type" value="Genomic_DNA"/>
</dbReference>
<dbReference type="EMBL" id="AC022409">
    <property type="status" value="NOT_ANNOTATED_CDS"/>
    <property type="molecule type" value="Genomic_DNA"/>
</dbReference>
<dbReference type="EMBL" id="AC093058">
    <property type="status" value="NOT_ANNOTATED_CDS"/>
    <property type="molecule type" value="Genomic_DNA"/>
</dbReference>
<dbReference type="EMBL" id="M61871">
    <property type="protein sequence ID" value="AAA58672.1"/>
    <property type="status" value="ALT_FRAME"/>
    <property type="molecule type" value="mRNA"/>
</dbReference>
<dbReference type="CCDS" id="CCDS42541.1">
    <molecule id="Q05481-1"/>
</dbReference>
<dbReference type="CCDS" id="CCDS74322.1">
    <molecule id="Q05481-2"/>
</dbReference>
<dbReference type="PIR" id="F39384">
    <property type="entry name" value="F39384"/>
</dbReference>
<dbReference type="PIR" id="PQ0636">
    <property type="entry name" value="PQ0636"/>
</dbReference>
<dbReference type="PIR" id="S35305">
    <property type="entry name" value="S35305"/>
</dbReference>
<dbReference type="RefSeq" id="NP_001287880.1">
    <molecule id="Q05481-2"/>
    <property type="nucleotide sequence ID" value="NM_001300951.2"/>
</dbReference>
<dbReference type="RefSeq" id="NP_003421.2">
    <molecule id="Q05481-1"/>
    <property type="nucleotide sequence ID" value="NM_003430.4"/>
</dbReference>
<dbReference type="SMR" id="Q05481"/>
<dbReference type="BioGRID" id="113460">
    <property type="interactions" value="14"/>
</dbReference>
<dbReference type="FunCoup" id="Q05481">
    <property type="interactions" value="589"/>
</dbReference>
<dbReference type="IntAct" id="Q05481">
    <property type="interactions" value="10"/>
</dbReference>
<dbReference type="STRING" id="9606.ENSP00000300619"/>
<dbReference type="GlyGen" id="Q05481">
    <property type="glycosylation" value="1 site, 1 O-linked glycan (1 site)"/>
</dbReference>
<dbReference type="iPTMnet" id="Q05481"/>
<dbReference type="PhosphoSitePlus" id="Q05481"/>
<dbReference type="BioMuta" id="ZNF91"/>
<dbReference type="DMDM" id="313104067"/>
<dbReference type="jPOST" id="Q05481"/>
<dbReference type="MassIVE" id="Q05481"/>
<dbReference type="PaxDb" id="9606-ENSP00000300619"/>
<dbReference type="PeptideAtlas" id="Q05481"/>
<dbReference type="ProteomicsDB" id="58328">
    <molecule id="Q05481-1"/>
</dbReference>
<dbReference type="ProteomicsDB" id="58329">
    <molecule id="Q05481-2"/>
</dbReference>
<dbReference type="Antibodypedia" id="28756">
    <property type="antibodies" value="105 antibodies from 12 providers"/>
</dbReference>
<dbReference type="DNASU" id="7644"/>
<dbReference type="Ensembl" id="ENST00000300619.12">
    <molecule id="Q05481-1"/>
    <property type="protein sequence ID" value="ENSP00000300619.6"/>
    <property type="gene ID" value="ENSG00000167232.14"/>
</dbReference>
<dbReference type="Ensembl" id="ENST00000397082.2">
    <molecule id="Q05481-2"/>
    <property type="protein sequence ID" value="ENSP00000380272.2"/>
    <property type="gene ID" value="ENSG00000167232.14"/>
</dbReference>
<dbReference type="GeneID" id="7644"/>
<dbReference type="KEGG" id="hsa:7644"/>
<dbReference type="MANE-Select" id="ENST00000300619.12">
    <property type="protein sequence ID" value="ENSP00000300619.6"/>
    <property type="RefSeq nucleotide sequence ID" value="NM_003430.4"/>
    <property type="RefSeq protein sequence ID" value="NP_003421.2"/>
</dbReference>
<dbReference type="UCSC" id="uc002nre.4">
    <molecule id="Q05481-1"/>
    <property type="organism name" value="human"/>
</dbReference>
<dbReference type="AGR" id="HGNC:13166"/>
<dbReference type="CTD" id="7644"/>
<dbReference type="DisGeNET" id="7644"/>
<dbReference type="GeneCards" id="ZNF91"/>
<dbReference type="HGNC" id="HGNC:13166">
    <property type="gene designation" value="ZNF91"/>
</dbReference>
<dbReference type="HPA" id="ENSG00000167232">
    <property type="expression patterns" value="Low tissue specificity"/>
</dbReference>
<dbReference type="MIM" id="603971">
    <property type="type" value="gene"/>
</dbReference>
<dbReference type="neXtProt" id="NX_Q05481"/>
<dbReference type="OpenTargets" id="ENSG00000167232"/>
<dbReference type="PharmGKB" id="PA37739"/>
<dbReference type="VEuPathDB" id="HostDB:ENSG00000167232"/>
<dbReference type="eggNOG" id="KOG1721">
    <property type="taxonomic scope" value="Eukaryota"/>
</dbReference>
<dbReference type="GeneTree" id="ENSGT00940000161942"/>
<dbReference type="HOGENOM" id="CLU_002678_17_1_1"/>
<dbReference type="InParanoid" id="Q05481"/>
<dbReference type="OMA" id="HIQIVHM"/>
<dbReference type="OrthoDB" id="9411774at2759"/>
<dbReference type="PAN-GO" id="Q05481">
    <property type="GO annotations" value="4 GO annotations based on evolutionary models"/>
</dbReference>
<dbReference type="PhylomeDB" id="Q05481"/>
<dbReference type="TreeFam" id="TF343410"/>
<dbReference type="PathwayCommons" id="Q05481"/>
<dbReference type="SignaLink" id="Q05481"/>
<dbReference type="SIGNOR" id="Q05481"/>
<dbReference type="BioGRID-ORCS" id="7644">
    <property type="hits" value="46 hits in 1098 CRISPR screens"/>
</dbReference>
<dbReference type="ChiTaRS" id="ZNF91">
    <property type="organism name" value="human"/>
</dbReference>
<dbReference type="GenomeRNAi" id="7644"/>
<dbReference type="Pharos" id="Q05481">
    <property type="development level" value="Tbio"/>
</dbReference>
<dbReference type="PRO" id="PR:Q05481"/>
<dbReference type="Proteomes" id="UP000005640">
    <property type="component" value="Chromosome 19"/>
</dbReference>
<dbReference type="RNAct" id="Q05481">
    <property type="molecule type" value="protein"/>
</dbReference>
<dbReference type="Bgee" id="ENSG00000167232">
    <property type="expression patterns" value="Expressed in type B pancreatic cell and 210 other cell types or tissues"/>
</dbReference>
<dbReference type="ExpressionAtlas" id="Q05481">
    <property type="expression patterns" value="baseline and differential"/>
</dbReference>
<dbReference type="GO" id="GO:0005634">
    <property type="term" value="C:nucleus"/>
    <property type="evidence" value="ECO:0000314"/>
    <property type="project" value="UniProtKB"/>
</dbReference>
<dbReference type="GO" id="GO:0003677">
    <property type="term" value="F:DNA binding"/>
    <property type="evidence" value="ECO:0007669"/>
    <property type="project" value="UniProtKB-KW"/>
</dbReference>
<dbReference type="GO" id="GO:0003700">
    <property type="term" value="F:DNA-binding transcription factor activity"/>
    <property type="evidence" value="ECO:0000303"/>
    <property type="project" value="UniProtKB"/>
</dbReference>
<dbReference type="GO" id="GO:0001227">
    <property type="term" value="F:DNA-binding transcription repressor activity, RNA polymerase II-specific"/>
    <property type="evidence" value="ECO:0000314"/>
    <property type="project" value="UniProtKB"/>
</dbReference>
<dbReference type="GO" id="GO:0008270">
    <property type="term" value="F:zinc ion binding"/>
    <property type="evidence" value="ECO:0000303"/>
    <property type="project" value="UniProtKB"/>
</dbReference>
<dbReference type="GO" id="GO:0006357">
    <property type="term" value="P:regulation of transcription by RNA polymerase II"/>
    <property type="evidence" value="ECO:0000318"/>
    <property type="project" value="GO_Central"/>
</dbReference>
<dbReference type="GO" id="GO:0010526">
    <property type="term" value="P:transposable element silencing"/>
    <property type="evidence" value="ECO:0000314"/>
    <property type="project" value="UniProtKB"/>
</dbReference>
<dbReference type="CDD" id="cd07765">
    <property type="entry name" value="KRAB_A-box"/>
    <property type="match status" value="1"/>
</dbReference>
<dbReference type="FunFam" id="3.30.160.60:FF:001956">
    <property type="entry name" value="ZFP37 zinc finger protein"/>
    <property type="match status" value="1"/>
</dbReference>
<dbReference type="FunFam" id="3.30.160.60:FF:000557">
    <property type="entry name" value="zinc finger and SCAN domain-containing protein 29"/>
    <property type="match status" value="1"/>
</dbReference>
<dbReference type="FunFam" id="3.30.160.60:FF:001737">
    <property type="entry name" value="Zinc finger protein 100"/>
    <property type="match status" value="2"/>
</dbReference>
<dbReference type="FunFam" id="3.30.160.60:FF:000374">
    <property type="entry name" value="Zinc finger protein 208"/>
    <property type="match status" value="6"/>
</dbReference>
<dbReference type="FunFam" id="3.30.160.60:FF:000034">
    <property type="entry name" value="zinc finger protein 25"/>
    <property type="match status" value="6"/>
</dbReference>
<dbReference type="FunFam" id="3.30.160.60:FF:001868">
    <property type="entry name" value="Zinc finger protein 264"/>
    <property type="match status" value="2"/>
</dbReference>
<dbReference type="FunFam" id="3.30.160.60:FF:002343">
    <property type="entry name" value="Zinc finger protein 33A"/>
    <property type="match status" value="1"/>
</dbReference>
<dbReference type="FunFam" id="3.30.160.60:FF:000120">
    <property type="entry name" value="Zinc finger protein 430"/>
    <property type="match status" value="5"/>
</dbReference>
<dbReference type="FunFam" id="3.30.160.60:FF:000672">
    <property type="entry name" value="Zinc finger protein 430"/>
    <property type="match status" value="1"/>
</dbReference>
<dbReference type="FunFam" id="3.30.160.60:FF:002090">
    <property type="entry name" value="Zinc finger protein 473"/>
    <property type="match status" value="2"/>
</dbReference>
<dbReference type="FunFam" id="3.30.160.60:FF:002254">
    <property type="entry name" value="Zinc finger protein 540"/>
    <property type="match status" value="2"/>
</dbReference>
<dbReference type="FunFam" id="3.30.160.60:FF:000052">
    <property type="entry name" value="zinc finger protein 546 isoform X1"/>
    <property type="match status" value="1"/>
</dbReference>
<dbReference type="FunFam" id="3.30.160.60:FF:000362">
    <property type="entry name" value="Zinc finger protein 606"/>
    <property type="match status" value="4"/>
</dbReference>
<dbReference type="Gene3D" id="6.10.140.140">
    <property type="match status" value="1"/>
</dbReference>
<dbReference type="Gene3D" id="3.30.160.60">
    <property type="entry name" value="Classic Zinc Finger"/>
    <property type="match status" value="34"/>
</dbReference>
<dbReference type="InterPro" id="IPR001909">
    <property type="entry name" value="KRAB"/>
</dbReference>
<dbReference type="InterPro" id="IPR036051">
    <property type="entry name" value="KRAB_dom_sf"/>
</dbReference>
<dbReference type="InterPro" id="IPR036236">
    <property type="entry name" value="Znf_C2H2_sf"/>
</dbReference>
<dbReference type="InterPro" id="IPR013087">
    <property type="entry name" value="Znf_C2H2_type"/>
</dbReference>
<dbReference type="PANTHER" id="PTHR23226:SF313">
    <property type="entry name" value="C2H2-TYPE DOMAIN-CONTAINING PROTEIN-RELATED"/>
    <property type="match status" value="1"/>
</dbReference>
<dbReference type="PANTHER" id="PTHR23226">
    <property type="entry name" value="ZINC FINGER AND SCAN DOMAIN-CONTAINING"/>
    <property type="match status" value="1"/>
</dbReference>
<dbReference type="Pfam" id="PF01352">
    <property type="entry name" value="KRAB"/>
    <property type="match status" value="1"/>
</dbReference>
<dbReference type="Pfam" id="PF00096">
    <property type="entry name" value="zf-C2H2"/>
    <property type="match status" value="29"/>
</dbReference>
<dbReference type="SMART" id="SM00349">
    <property type="entry name" value="KRAB"/>
    <property type="match status" value="1"/>
</dbReference>
<dbReference type="SMART" id="SM00355">
    <property type="entry name" value="ZnF_C2H2"/>
    <property type="match status" value="34"/>
</dbReference>
<dbReference type="SUPFAM" id="SSF57667">
    <property type="entry name" value="beta-beta-alpha zinc fingers"/>
    <property type="match status" value="19"/>
</dbReference>
<dbReference type="SUPFAM" id="SSF109640">
    <property type="entry name" value="KRAB domain (Kruppel-associated box)"/>
    <property type="match status" value="1"/>
</dbReference>
<dbReference type="PROSITE" id="PS50805">
    <property type="entry name" value="KRAB"/>
    <property type="match status" value="1"/>
</dbReference>
<dbReference type="PROSITE" id="PS00028">
    <property type="entry name" value="ZINC_FINGER_C2H2_1"/>
    <property type="match status" value="31"/>
</dbReference>
<dbReference type="PROSITE" id="PS50157">
    <property type="entry name" value="ZINC_FINGER_C2H2_2"/>
    <property type="match status" value="35"/>
</dbReference>
<reference key="1">
    <citation type="journal article" date="1993" name="EMBO J.">
        <title>Clustered organization of homologous KRAB zinc-finger genes with enhanced expression in human T lymphoid cells.</title>
        <authorList>
            <person name="Bellefroid E.J."/>
            <person name="Marine J.-C."/>
            <person name="Ried T."/>
            <person name="Lecocq P.J."/>
            <person name="Riviere M."/>
            <person name="Amemiya C.T."/>
            <person name="Poncelet D.A."/>
            <person name="Coulie P.G."/>
            <person name="de Jong P.J."/>
            <person name="Szpirer C."/>
            <person name="Ward D.C."/>
            <person name="Martial J.A."/>
        </authorList>
    </citation>
    <scope>NUCLEOTIDE SEQUENCE [MRNA] (ISOFORM 1)</scope>
    <scope>VARIANTS ALA-336 AND THR-386</scope>
</reference>
<reference key="2">
    <citation type="journal article" date="2004" name="Nat. Genet.">
        <title>Complete sequencing and characterization of 21,243 full-length human cDNAs.</title>
        <authorList>
            <person name="Ota T."/>
            <person name="Suzuki Y."/>
            <person name="Nishikawa T."/>
            <person name="Otsuki T."/>
            <person name="Sugiyama T."/>
            <person name="Irie R."/>
            <person name="Wakamatsu A."/>
            <person name="Hayashi K."/>
            <person name="Sato H."/>
            <person name="Nagai K."/>
            <person name="Kimura K."/>
            <person name="Makita H."/>
            <person name="Sekine M."/>
            <person name="Obayashi M."/>
            <person name="Nishi T."/>
            <person name="Shibahara T."/>
            <person name="Tanaka T."/>
            <person name="Ishii S."/>
            <person name="Yamamoto J."/>
            <person name="Saito K."/>
            <person name="Kawai Y."/>
            <person name="Isono Y."/>
            <person name="Nakamura Y."/>
            <person name="Nagahari K."/>
            <person name="Murakami K."/>
            <person name="Yasuda T."/>
            <person name="Iwayanagi T."/>
            <person name="Wagatsuma M."/>
            <person name="Shiratori A."/>
            <person name="Sudo H."/>
            <person name="Hosoiri T."/>
            <person name="Kaku Y."/>
            <person name="Kodaira H."/>
            <person name="Kondo H."/>
            <person name="Sugawara M."/>
            <person name="Takahashi M."/>
            <person name="Kanda K."/>
            <person name="Yokoi T."/>
            <person name="Furuya T."/>
            <person name="Kikkawa E."/>
            <person name="Omura Y."/>
            <person name="Abe K."/>
            <person name="Kamihara K."/>
            <person name="Katsuta N."/>
            <person name="Sato K."/>
            <person name="Tanikawa M."/>
            <person name="Yamazaki M."/>
            <person name="Ninomiya K."/>
            <person name="Ishibashi T."/>
            <person name="Yamashita H."/>
            <person name="Murakawa K."/>
            <person name="Fujimori K."/>
            <person name="Tanai H."/>
            <person name="Kimata M."/>
            <person name="Watanabe M."/>
            <person name="Hiraoka S."/>
            <person name="Chiba Y."/>
            <person name="Ishida S."/>
            <person name="Ono Y."/>
            <person name="Takiguchi S."/>
            <person name="Watanabe S."/>
            <person name="Yosida M."/>
            <person name="Hotuta T."/>
            <person name="Kusano J."/>
            <person name="Kanehori K."/>
            <person name="Takahashi-Fujii A."/>
            <person name="Hara H."/>
            <person name="Tanase T.-O."/>
            <person name="Nomura Y."/>
            <person name="Togiya S."/>
            <person name="Komai F."/>
            <person name="Hara R."/>
            <person name="Takeuchi K."/>
            <person name="Arita M."/>
            <person name="Imose N."/>
            <person name="Musashino K."/>
            <person name="Yuuki H."/>
            <person name="Oshima A."/>
            <person name="Sasaki N."/>
            <person name="Aotsuka S."/>
            <person name="Yoshikawa Y."/>
            <person name="Matsunawa H."/>
            <person name="Ichihara T."/>
            <person name="Shiohata N."/>
            <person name="Sano S."/>
            <person name="Moriya S."/>
            <person name="Momiyama H."/>
            <person name="Satoh N."/>
            <person name="Takami S."/>
            <person name="Terashima Y."/>
            <person name="Suzuki O."/>
            <person name="Nakagawa S."/>
            <person name="Senoh A."/>
            <person name="Mizoguchi H."/>
            <person name="Goto Y."/>
            <person name="Shimizu F."/>
            <person name="Wakebe H."/>
            <person name="Hishigaki H."/>
            <person name="Watanabe T."/>
            <person name="Sugiyama A."/>
            <person name="Takemoto M."/>
            <person name="Kawakami B."/>
            <person name="Yamazaki M."/>
            <person name="Watanabe K."/>
            <person name="Kumagai A."/>
            <person name="Itakura S."/>
            <person name="Fukuzumi Y."/>
            <person name="Fujimori Y."/>
            <person name="Komiyama M."/>
            <person name="Tashiro H."/>
            <person name="Tanigami A."/>
            <person name="Fujiwara T."/>
            <person name="Ono T."/>
            <person name="Yamada K."/>
            <person name="Fujii Y."/>
            <person name="Ozaki K."/>
            <person name="Hirao M."/>
            <person name="Ohmori Y."/>
            <person name="Kawabata A."/>
            <person name="Hikiji T."/>
            <person name="Kobatake N."/>
            <person name="Inagaki H."/>
            <person name="Ikema Y."/>
            <person name="Okamoto S."/>
            <person name="Okitani R."/>
            <person name="Kawakami T."/>
            <person name="Noguchi S."/>
            <person name="Itoh T."/>
            <person name="Shigeta K."/>
            <person name="Senba T."/>
            <person name="Matsumura K."/>
            <person name="Nakajima Y."/>
            <person name="Mizuno T."/>
            <person name="Morinaga M."/>
            <person name="Sasaki M."/>
            <person name="Togashi T."/>
            <person name="Oyama M."/>
            <person name="Hata H."/>
            <person name="Watanabe M."/>
            <person name="Komatsu T."/>
            <person name="Mizushima-Sugano J."/>
            <person name="Satoh T."/>
            <person name="Shirai Y."/>
            <person name="Takahashi Y."/>
            <person name="Nakagawa K."/>
            <person name="Okumura K."/>
            <person name="Nagase T."/>
            <person name="Nomura N."/>
            <person name="Kikuchi H."/>
            <person name="Masuho Y."/>
            <person name="Yamashita R."/>
            <person name="Nakai K."/>
            <person name="Yada T."/>
            <person name="Nakamura Y."/>
            <person name="Ohara O."/>
            <person name="Isogai T."/>
            <person name="Sugano S."/>
        </authorList>
    </citation>
    <scope>NUCLEOTIDE SEQUENCE [LARGE SCALE MRNA] (ISOFORMS 1 AND 2)</scope>
    <scope>VARIANT THR-386</scope>
    <source>
        <tissue>Placenta</tissue>
    </source>
</reference>
<reference key="3">
    <citation type="journal article" date="2004" name="Nature">
        <title>The DNA sequence and biology of human chromosome 19.</title>
        <authorList>
            <person name="Grimwood J."/>
            <person name="Gordon L.A."/>
            <person name="Olsen A.S."/>
            <person name="Terry A."/>
            <person name="Schmutz J."/>
            <person name="Lamerdin J.E."/>
            <person name="Hellsten U."/>
            <person name="Goodstein D."/>
            <person name="Couronne O."/>
            <person name="Tran-Gyamfi M."/>
            <person name="Aerts A."/>
            <person name="Altherr M."/>
            <person name="Ashworth L."/>
            <person name="Bajorek E."/>
            <person name="Black S."/>
            <person name="Branscomb E."/>
            <person name="Caenepeel S."/>
            <person name="Carrano A.V."/>
            <person name="Caoile C."/>
            <person name="Chan Y.M."/>
            <person name="Christensen M."/>
            <person name="Cleland C.A."/>
            <person name="Copeland A."/>
            <person name="Dalin E."/>
            <person name="Dehal P."/>
            <person name="Denys M."/>
            <person name="Detter J.C."/>
            <person name="Escobar J."/>
            <person name="Flowers D."/>
            <person name="Fotopulos D."/>
            <person name="Garcia C."/>
            <person name="Georgescu A.M."/>
            <person name="Glavina T."/>
            <person name="Gomez M."/>
            <person name="Gonzales E."/>
            <person name="Groza M."/>
            <person name="Hammon N."/>
            <person name="Hawkins T."/>
            <person name="Haydu L."/>
            <person name="Ho I."/>
            <person name="Huang W."/>
            <person name="Israni S."/>
            <person name="Jett J."/>
            <person name="Kadner K."/>
            <person name="Kimball H."/>
            <person name="Kobayashi A."/>
            <person name="Larionov V."/>
            <person name="Leem S.-H."/>
            <person name="Lopez F."/>
            <person name="Lou Y."/>
            <person name="Lowry S."/>
            <person name="Malfatti S."/>
            <person name="Martinez D."/>
            <person name="McCready P.M."/>
            <person name="Medina C."/>
            <person name="Morgan J."/>
            <person name="Nelson K."/>
            <person name="Nolan M."/>
            <person name="Ovcharenko I."/>
            <person name="Pitluck S."/>
            <person name="Pollard M."/>
            <person name="Popkie A.P."/>
            <person name="Predki P."/>
            <person name="Quan G."/>
            <person name="Ramirez L."/>
            <person name="Rash S."/>
            <person name="Retterer J."/>
            <person name="Rodriguez A."/>
            <person name="Rogers S."/>
            <person name="Salamov A."/>
            <person name="Salazar A."/>
            <person name="She X."/>
            <person name="Smith D."/>
            <person name="Slezak T."/>
            <person name="Solovyev V."/>
            <person name="Thayer N."/>
            <person name="Tice H."/>
            <person name="Tsai M."/>
            <person name="Ustaszewska A."/>
            <person name="Vo N."/>
            <person name="Wagner M."/>
            <person name="Wheeler J."/>
            <person name="Wu K."/>
            <person name="Xie G."/>
            <person name="Yang J."/>
            <person name="Dubchak I."/>
            <person name="Furey T.S."/>
            <person name="DeJong P."/>
            <person name="Dickson M."/>
            <person name="Gordon D."/>
            <person name="Eichler E.E."/>
            <person name="Pennacchio L.A."/>
            <person name="Richardson P."/>
            <person name="Stubbs L."/>
            <person name="Rokhsar D.S."/>
            <person name="Myers R.M."/>
            <person name="Rubin E.M."/>
            <person name="Lucas S.M."/>
        </authorList>
    </citation>
    <scope>NUCLEOTIDE SEQUENCE [LARGE SCALE GENOMIC DNA]</scope>
</reference>
<reference key="4">
    <citation type="journal article" date="1991" name="Proc. Natl. Acad. Sci. U.S.A.">
        <title>The evolutionarily conserved Kruppel-associated box domain defines a subfamily of eukaryotic multifingered proteins.</title>
        <authorList>
            <person name="Bellefroid E.J."/>
            <person name="Poncelet D.A."/>
            <person name="Lecocq P.J."/>
            <person name="Revelant O."/>
            <person name="Martial J.A."/>
        </authorList>
    </citation>
    <scope>NUCLEOTIDE SEQUENCE [MRNA] OF 15-204 (ISOFORM 1)</scope>
</reference>
<reference key="5">
    <citation type="journal article" date="1995" name="Proc. Natl. Acad. Sci. U.S.A.">
        <title>Emergence of the ZNF91 Kruppel-associated box-containing zinc finger gene family in the last common ancestor of anthropoidea.</title>
        <authorList>
            <person name="Bellefroid E.J."/>
            <person name="Marine J.C."/>
            <person name="Matera A.G."/>
            <person name="Bourguignon C."/>
            <person name="Desai T."/>
            <person name="Healy K.C."/>
            <person name="Bray-Ward P."/>
            <person name="Martial J.A."/>
            <person name="Ihle J.N."/>
            <person name="Ward D.C."/>
        </authorList>
    </citation>
    <scope>IDENTIFICATION</scope>
</reference>
<reference key="6">
    <citation type="journal article" date="2001" name="Int. Immunol.">
        <title>Characterization of the human Fc gamma RIIB gene promoter: human zinc-finger proteins (ZNF140 and ZNF91) that bind to different regions function as transcription repressors.</title>
        <authorList>
            <person name="Nishimura T."/>
            <person name="Narita T."/>
            <person name="Miyazaki E."/>
            <person name="Ito T."/>
            <person name="Nishimoto N."/>
            <person name="Yoshizaki K."/>
            <person name="Martial J.A."/>
            <person name="Bellfroid E.J."/>
            <person name="Vissing H."/>
            <person name="Taniyama T."/>
        </authorList>
    </citation>
    <scope>FUNCTION</scope>
</reference>
<reference key="7">
    <citation type="journal article" date="2006" name="Genome Res.">
        <title>Evolutionary expansion and divergence in the ZNF91 subfamily of primate-specific zinc finger genes.</title>
        <authorList>
            <person name="Hamilton A.T."/>
            <person name="Huntley S."/>
            <person name="Tran-Gyamfi M."/>
            <person name="Baggott D.M."/>
            <person name="Gordon L."/>
            <person name="Stubbs L."/>
        </authorList>
    </citation>
    <scope>IDENTIFICATION</scope>
</reference>
<reference key="8">
    <citation type="journal article" date="2013" name="Cell. Mol. Life Sci.">
        <title>Novel activity of KRAB domain that functions to reinforce nuclear localization of KRAB-containing zinc finger proteins by interacting with KAP1.</title>
        <authorList>
            <person name="Wang W."/>
            <person name="Cai J."/>
            <person name="Wu Y."/>
            <person name="Hu L."/>
            <person name="Chen Z."/>
            <person name="Hu J."/>
            <person name="Chen Z."/>
            <person name="Li W."/>
            <person name="Guo M."/>
            <person name="Huang Z."/>
        </authorList>
    </citation>
    <scope>SUBCELLULAR LOCATION</scope>
</reference>
<reference key="9">
    <citation type="journal article" date="2014" name="Nature">
        <title>An evolutionary arms race between KRAB zinc-finger genes ZNF91/93 and SVA/L1 retrotransposons.</title>
        <authorList>
            <person name="Jacobs F.M."/>
            <person name="Greenberg D."/>
            <person name="Nguyen N."/>
            <person name="Haeussler M."/>
            <person name="Ewing A.D."/>
            <person name="Katzman S."/>
            <person name="Paten B."/>
            <person name="Salama S.R."/>
            <person name="Haussler D."/>
        </authorList>
    </citation>
    <scope>FUNCTION</scope>
</reference>
<feature type="chain" id="PRO_0000047400" description="Zinc finger protein 91">
    <location>
        <begin position="1"/>
        <end position="1191"/>
    </location>
</feature>
<feature type="domain" description="KRAB" evidence="2">
    <location>
        <begin position="13"/>
        <end position="84"/>
    </location>
</feature>
<feature type="zinc finger region" description="C2H2-type 1; degenerate" evidence="1">
    <location>
        <begin position="154"/>
        <end position="176"/>
    </location>
</feature>
<feature type="zinc finger region" description="C2H2-type 2" evidence="1">
    <location>
        <begin position="179"/>
        <end position="200"/>
    </location>
</feature>
<feature type="zinc finger region" description="C2H2-type 3" evidence="1">
    <location>
        <begin position="208"/>
        <end position="232"/>
    </location>
</feature>
<feature type="zinc finger region" description="C2H2-type 4" evidence="1">
    <location>
        <begin position="238"/>
        <end position="260"/>
    </location>
</feature>
<feature type="zinc finger region" description="C2H2-type 5" evidence="1">
    <location>
        <begin position="266"/>
        <end position="288"/>
    </location>
</feature>
<feature type="zinc finger region" description="C2H2-type 6" evidence="1">
    <location>
        <begin position="294"/>
        <end position="316"/>
    </location>
</feature>
<feature type="zinc finger region" description="C2H2-type 7" evidence="1">
    <location>
        <begin position="322"/>
        <end position="344"/>
    </location>
</feature>
<feature type="zinc finger region" description="C2H2-type 8" evidence="1">
    <location>
        <begin position="350"/>
        <end position="372"/>
    </location>
</feature>
<feature type="zinc finger region" description="C2H2-type 9" evidence="1">
    <location>
        <begin position="378"/>
        <end position="400"/>
    </location>
</feature>
<feature type="zinc finger region" description="C2H2-type 10" evidence="1">
    <location>
        <begin position="406"/>
        <end position="428"/>
    </location>
</feature>
<feature type="zinc finger region" description="C2H2-type 11" evidence="1">
    <location>
        <begin position="434"/>
        <end position="456"/>
    </location>
</feature>
<feature type="zinc finger region" description="C2H2-type 12" evidence="1">
    <location>
        <begin position="462"/>
        <end position="484"/>
    </location>
</feature>
<feature type="zinc finger region" description="C2H2-type 13" evidence="1">
    <location>
        <begin position="490"/>
        <end position="512"/>
    </location>
</feature>
<feature type="zinc finger region" description="C2H2-type 14; degenerate" evidence="1">
    <location>
        <begin position="518"/>
        <end position="540"/>
    </location>
</feature>
<feature type="zinc finger region" description="C2H2-type 15" evidence="1">
    <location>
        <begin position="546"/>
        <end position="568"/>
    </location>
</feature>
<feature type="zinc finger region" description="C2H2-type 16" evidence="1">
    <location>
        <begin position="574"/>
        <end position="596"/>
    </location>
</feature>
<feature type="zinc finger region" description="C2H2-type 17" evidence="1">
    <location>
        <begin position="602"/>
        <end position="624"/>
    </location>
</feature>
<feature type="zinc finger region" description="C2H2-type 18" evidence="1">
    <location>
        <begin position="630"/>
        <end position="652"/>
    </location>
</feature>
<feature type="zinc finger region" description="C2H2-type 19" evidence="1">
    <location>
        <begin position="658"/>
        <end position="680"/>
    </location>
</feature>
<feature type="zinc finger region" description="C2H2-type 20" evidence="1">
    <location>
        <begin position="686"/>
        <end position="708"/>
    </location>
</feature>
<feature type="zinc finger region" description="C2H2-type 21" evidence="1">
    <location>
        <begin position="714"/>
        <end position="736"/>
    </location>
</feature>
<feature type="zinc finger region" description="C2H2-type 22" evidence="1">
    <location>
        <begin position="742"/>
        <end position="764"/>
    </location>
</feature>
<feature type="zinc finger region" description="C2H2-type 23" evidence="1">
    <location>
        <begin position="770"/>
        <end position="792"/>
    </location>
</feature>
<feature type="zinc finger region" description="C2H2-type 24" evidence="1">
    <location>
        <begin position="798"/>
        <end position="820"/>
    </location>
</feature>
<feature type="zinc finger region" description="C2H2-type 25" evidence="1">
    <location>
        <begin position="826"/>
        <end position="848"/>
    </location>
</feature>
<feature type="zinc finger region" description="C2H2-type 26" evidence="1">
    <location>
        <begin position="854"/>
        <end position="876"/>
    </location>
</feature>
<feature type="zinc finger region" description="C2H2-type 27; degenerate" evidence="1">
    <location>
        <begin position="885"/>
        <end position="904"/>
    </location>
</feature>
<feature type="zinc finger region" description="C2H2-type 28" evidence="1">
    <location>
        <begin position="910"/>
        <end position="932"/>
    </location>
</feature>
<feature type="zinc finger region" description="C2H2-type 29" evidence="1">
    <location>
        <begin position="938"/>
        <end position="960"/>
    </location>
</feature>
<feature type="zinc finger region" description="C2H2-type 30" evidence="1">
    <location>
        <begin position="966"/>
        <end position="988"/>
    </location>
</feature>
<feature type="zinc finger region" description="C2H2-type 31" evidence="1">
    <location>
        <begin position="994"/>
        <end position="1016"/>
    </location>
</feature>
<feature type="zinc finger region" description="C2H2-type 32" evidence="1">
    <location>
        <begin position="1022"/>
        <end position="1044"/>
    </location>
</feature>
<feature type="zinc finger region" description="C2H2-type 33" evidence="1">
    <location>
        <begin position="1050"/>
        <end position="1072"/>
    </location>
</feature>
<feature type="zinc finger region" description="C2H2-type 34" evidence="1">
    <location>
        <begin position="1078"/>
        <end position="1100"/>
    </location>
</feature>
<feature type="zinc finger region" description="C2H2-type 35" evidence="1">
    <location>
        <begin position="1106"/>
        <end position="1128"/>
    </location>
</feature>
<feature type="zinc finger region" description="C2H2-type 36" evidence="1">
    <location>
        <begin position="1134"/>
        <end position="1156"/>
    </location>
</feature>
<feature type="splice variant" id="VSP_040288" description="In isoform 2." evidence="7">
    <location>
        <begin position="55"/>
        <end position="86"/>
    </location>
</feature>
<feature type="sequence variant" id="VAR_057393" description="In dbSNP:rs296091.">
    <original>Y</original>
    <variation>H</variation>
    <location>
        <position position="112"/>
    </location>
</feature>
<feature type="sequence variant" id="VAR_060417" description="In dbSNP:rs449447." evidence="6">
    <original>T</original>
    <variation>A</variation>
    <location>
        <position position="336"/>
    </location>
</feature>
<feature type="sequence variant" id="VAR_060418" description="In dbSNP:rs403356." evidence="3 6">
    <original>A</original>
    <variation>T</variation>
    <location>
        <position position="386"/>
    </location>
</feature>
<feature type="sequence variant" id="VAR_059897" description="In dbSNP:rs440638.">
    <original>F</original>
    <variation>I</variation>
    <location>
        <position position="455"/>
    </location>
</feature>
<feature type="sequence variant" id="VAR_060419" description="In dbSNP:rs12976753.">
    <original>E</original>
    <variation>K</variation>
    <location>
        <position position="521"/>
    </location>
</feature>
<feature type="sequence variant" id="VAR_057394" description="In dbSNP:rs296093.">
    <original>T</original>
    <variation>A</variation>
    <location>
        <position position="896"/>
    </location>
</feature>
<feature type="sequence variant" id="VAR_060420" description="In dbSNP:rs1821844.">
    <original>R</original>
    <variation>I</variation>
    <location>
        <position position="1011"/>
    </location>
</feature>
<feature type="sequence variant" id="VAR_060421" description="In dbSNP:rs1821846.">
    <original>R</original>
    <variation>Q</variation>
    <location>
        <position position="1033"/>
    </location>
</feature>
<feature type="sequence variant" id="VAR_059898" description="In dbSNP:rs428549.">
    <original>L</original>
    <variation>P</variation>
    <location>
        <position position="1164"/>
    </location>
</feature>
<feature type="sequence variant" id="VAR_059899" description="In dbSNP:rs385750.">
    <original>L</original>
    <variation>V</variation>
    <location>
        <position position="1164"/>
    </location>
</feature>
<feature type="sequence conflict" description="In Ref. 2; BAH13252." evidence="8" ref="2">
    <original>L</original>
    <variation>F</variation>
    <location>
        <position position="142"/>
    </location>
</feature>
<feature type="sequence conflict" description="In Ref. 1; AAA59469." evidence="8" ref="1">
    <original>R</original>
    <variation>H</variation>
    <location>
        <position position="333"/>
    </location>
</feature>
<feature type="sequence conflict" description="In Ref. 1; AAA59469." evidence="8" ref="1">
    <original>A</original>
    <variation>G</variation>
    <location>
        <position position="470"/>
    </location>
</feature>
<feature type="sequence conflict" description="In Ref. 2; BAF83945." evidence="8" ref="2">
    <original>E</original>
    <variation>V</variation>
    <location>
        <position position="493"/>
    </location>
</feature>
<feature type="sequence conflict" description="In Ref. 2; BAF83945." evidence="8" ref="2">
    <original>C</original>
    <variation>R</variation>
    <location>
        <position position="663"/>
    </location>
</feature>
<feature type="sequence conflict" description="In Ref. 2; BAH13252." evidence="8" ref="2">
    <original>H</original>
    <variation>R</variation>
    <location>
        <position position="760"/>
    </location>
</feature>
<feature type="sequence conflict" description="In Ref. 2; BAH13252." evidence="8" ref="2">
    <original>E</original>
    <variation>G</variation>
    <location>
        <position position="907"/>
    </location>
</feature>
<feature type="sequence conflict" description="In Ref. 1; AAA59469." evidence="8" ref="1">
    <original>T</original>
    <variation>P</variation>
    <location>
        <position position="909"/>
    </location>
</feature>
<feature type="sequence conflict" description="In Ref. 1; AAA59469." evidence="8" ref="1">
    <original>G</original>
    <variation>C</variation>
    <location>
        <position position="1140"/>
    </location>
</feature>
<feature type="sequence conflict" description="In Ref. 2; BAF83945." evidence="8" ref="2">
    <original>L</original>
    <variation>A</variation>
    <location>
        <position position="1164"/>
    </location>
</feature>
<proteinExistence type="evidence at protein level"/>